<organism>
    <name type="scientific">Heteroscodra maculata</name>
    <name type="common">Togo starburst tarantula</name>
    <name type="synonym">Togo starburst baboon spider</name>
    <dbReference type="NCBI Taxonomy" id="268413"/>
    <lineage>
        <taxon>Eukaryota</taxon>
        <taxon>Metazoa</taxon>
        <taxon>Ecdysozoa</taxon>
        <taxon>Arthropoda</taxon>
        <taxon>Chelicerata</taxon>
        <taxon>Arachnida</taxon>
        <taxon>Araneae</taxon>
        <taxon>Mygalomorphae</taxon>
        <taxon>Theraphosidae</taxon>
        <taxon>Heteroscodra</taxon>
    </lineage>
</organism>
<proteinExistence type="evidence at protein level"/>
<dbReference type="PDB" id="6V6T">
    <property type="method" value="NMR"/>
    <property type="chains" value="A=1-34"/>
</dbReference>
<dbReference type="PDBsum" id="6V6T"/>
<dbReference type="BMRB" id="P0DOC5"/>
<dbReference type="SMR" id="P0DOC5"/>
<dbReference type="GO" id="GO:0005576">
    <property type="term" value="C:extracellular region"/>
    <property type="evidence" value="ECO:0007669"/>
    <property type="project" value="UniProtKB-SubCell"/>
</dbReference>
<dbReference type="GO" id="GO:0008200">
    <property type="term" value="F:ion channel inhibitor activity"/>
    <property type="evidence" value="ECO:0007669"/>
    <property type="project" value="InterPro"/>
</dbReference>
<dbReference type="GO" id="GO:0017080">
    <property type="term" value="F:sodium channel regulator activity"/>
    <property type="evidence" value="ECO:0000314"/>
    <property type="project" value="UniProtKB"/>
</dbReference>
<dbReference type="GO" id="GO:0090729">
    <property type="term" value="F:toxin activity"/>
    <property type="evidence" value="ECO:0000314"/>
    <property type="project" value="UniProtKB"/>
</dbReference>
<dbReference type="GO" id="GO:0044494">
    <property type="term" value="P:envenomation resulting in positive regulation of voltage-gated sodium channel activity in another organism"/>
    <property type="evidence" value="ECO:0000314"/>
    <property type="project" value="UniProtKB"/>
</dbReference>
<dbReference type="InterPro" id="IPR011696">
    <property type="entry name" value="Huwentoxin-1"/>
</dbReference>
<dbReference type="Pfam" id="PF07740">
    <property type="entry name" value="Toxin_12"/>
    <property type="match status" value="1"/>
</dbReference>
<dbReference type="SUPFAM" id="SSF57059">
    <property type="entry name" value="omega toxin-like"/>
    <property type="match status" value="1"/>
</dbReference>
<accession>P0DOC5</accession>
<feature type="chain" id="PRO_0000437537" description="Delta-theraphotoxin-Hm1b" evidence="2">
    <location>
        <begin position="1"/>
        <end position="34"/>
    </location>
</feature>
<feature type="modified residue" description="Phenylalanine amide" evidence="2 3">
    <location>
        <position position="34"/>
    </location>
</feature>
<feature type="disulfide bond" evidence="3 8">
    <location>
        <begin position="2"/>
        <end position="16"/>
    </location>
</feature>
<feature type="disulfide bond" evidence="3 8">
    <location>
        <begin position="9"/>
        <end position="21"/>
    </location>
</feature>
<feature type="disulfide bond" evidence="3 8">
    <location>
        <begin position="15"/>
        <end position="28"/>
    </location>
</feature>
<feature type="helix" evidence="9">
    <location>
        <begin position="12"/>
        <end position="14"/>
    </location>
</feature>
<feature type="turn" evidence="9">
    <location>
        <begin position="23"/>
        <end position="25"/>
    </location>
</feature>
<name>TX1B_HETMC</name>
<sequence length="34" mass="3901">ECRYLFGGCKTTADCCKHLGCRTDLYYCAWDGTF</sequence>
<evidence type="ECO:0000250" key="1">
    <source>
        <dbReference type="UniProtKB" id="P60992"/>
    </source>
</evidence>
<evidence type="ECO:0000269" key="2">
    <source>
    </source>
</evidence>
<evidence type="ECO:0000269" key="3">
    <source>
    </source>
</evidence>
<evidence type="ECO:0000303" key="4">
    <source>
    </source>
</evidence>
<evidence type="ECO:0000305" key="5"/>
<evidence type="ECO:0000305" key="6">
    <source>
    </source>
</evidence>
<evidence type="ECO:0000305" key="7">
    <source>
    </source>
</evidence>
<evidence type="ECO:0007744" key="8">
    <source>
        <dbReference type="PDB" id="6V6T"/>
    </source>
</evidence>
<evidence type="ECO:0007829" key="9">
    <source>
        <dbReference type="PDB" id="6V6T"/>
    </source>
</evidence>
<keyword id="KW-0002">3D-structure</keyword>
<keyword id="KW-0027">Amidation</keyword>
<keyword id="KW-0903">Direct protein sequencing</keyword>
<keyword id="KW-1015">Disulfide bond</keyword>
<keyword id="KW-0872">Ion channel impairing toxin</keyword>
<keyword id="KW-0960">Knottin</keyword>
<keyword id="KW-0528">Neurotoxin</keyword>
<keyword id="KW-0582">Pharmaceutical</keyword>
<keyword id="KW-0964">Secreted</keyword>
<keyword id="KW-0800">Toxin</keyword>
<keyword id="KW-0738">Voltage-gated sodium channel impairing toxin</keyword>
<comment type="function">
    <text evidence="1 2 3">Gating-modifier toxin that potently and selectively acts on Nav1.1/SCN1A and Nav1.3/SCN3A (PubMed:32335140). It enhances hNav1.1/SCN1A currents and delays fast inactivation of the channel (EC(50)=11.6 nM), leading to a sustained current (PubMed:32335140). Similar effects are observed at Nav1.3/SCN3A (EC(50)=11.8 nM), but with less sustained currents (PubMed:32335140). When tested on Nav1.2/SCN2A, the native toxin decreases the peak current by 50% at saturating concentration, whereas the recombinant toxin only shows a weak decrease of peak current (PubMed:32335140). The native toxin specifically activates the voltage-gated sodium channel Nav1.1/SCN1A in somatosensory neurons to elicit acute pain and mechanical allodynia (PubMed:27281198). When tested on Nav1.1/SCN1A, the toxin induces a hyperpolarising shift of the voltage-dependence of steady-state activation, and induces a depolarizing shift in the voltage dependence of inactivation (PubMed:32335140). In addition, it does not modify the recovery from fast inactivation in Nav1.1/SCN1A (PubMed:32335140). The toxin hydrophobic face probably interacts with the domain IV voltage-sensor of Nav1.1/SCN1A and Nav1.3/SCN3A and may trap the voltage-sensing S4 helix in a partially activated state (PubMed:32335140). In vivo, intracerebroventricular injection into mice elicits convulsions, spasms, tremors and rapid death (By similarity). When injected into mouse hindpaw, the toxin elicits an immediate and robust response to pain (PubMed:27281198). However, intraplantar injection of toxin does not cause neurogenic inflammation or alter sensitivity to heat, indicative of a modality-specific effect on mechanosensitive neurons (PubMed:27281198).</text>
</comment>
<comment type="subcellular location">
    <subcellularLocation>
        <location evidence="2">Secreted</location>
    </subcellularLocation>
</comment>
<comment type="tissue specificity">
    <text evidence="6">Expressed by the venom gland.</text>
</comment>
<comment type="domain">
    <text evidence="3">The presence of a 'disulfide through disulfide knot' structurally defines this protein as a knottin.</text>
</comment>
<comment type="mass spectrometry" mass="3892.6" method="MALDI" evidence="2"/>
<comment type="mass spectrometry" mass="3892.23" method="MALDI" evidence="3">
    <text>Monoisotopic mass.</text>
</comment>
<comment type="pharmaceutical">
    <text evidence="7">May be used to develop new agents to treat Nav1.1/SCN1A-associated epilepsies, such as the Dravet syndrome.</text>
</comment>
<comment type="miscellaneous">
    <text evidence="3">Shows high stability in both cerebrospinal fluid and human serum (PubMed:32335140). Half-life of the recombinant toxin is &gt;40 hours in human serum, and &gt;70 hours in human cerebrospinal fluid (PubMed:32335140).</text>
</comment>
<comment type="miscellaneous">
    <text evidence="3">Negative results: does not inhibit Nav1.4/SCN4A, Nav1.5/SCN5A, Nav1.6/SCN8A, and Nav1.7/SCN9A sodium channels.</text>
</comment>
<comment type="similarity">
    <text evidence="5">Belongs to the neurotoxin 10 (Hwtx-1) family. 09 (HaTx) subfamily.</text>
</comment>
<protein>
    <recommendedName>
        <fullName evidence="4">Delta-theraphotoxin-Hm1b</fullName>
        <shortName evidence="6">Delta-TRTX-Hm1b</shortName>
    </recommendedName>
</protein>
<reference key="1">
    <citation type="journal article" date="2016" name="Nature">
        <title>Selective spider toxins reveal a role for the Nav1.1 channel in mechanical pain.</title>
        <authorList>
            <person name="Osteen J.D."/>
            <person name="Herzig V."/>
            <person name="Gilchrist J."/>
            <person name="Emrick J.J."/>
            <person name="Zhang C."/>
            <person name="Wang X."/>
            <person name="Castro J."/>
            <person name="Garcia-Caraballo S."/>
            <person name="Grundy L."/>
            <person name="Rychkov G.Y."/>
            <person name="Weyer A.D."/>
            <person name="Dekan Z."/>
            <person name="Undheim E.A."/>
            <person name="Alewood P."/>
            <person name="Stucky C.L."/>
            <person name="Brierley S.M."/>
            <person name="Basbaum A.I."/>
            <person name="Bosmans F."/>
            <person name="King G.F."/>
            <person name="Julius D."/>
        </authorList>
    </citation>
    <scope>PROTEIN SEQUENCE</scope>
    <scope>FUNCTION</scope>
    <scope>SUBCELLULAR LOCATION</scope>
    <scope>MASS SPECTROMETRY</scope>
    <scope>AMIDATION AT PHE-34</scope>
    <scope>BIOASSAY</scope>
    <source>
        <tissue>Venom</tissue>
    </source>
</reference>
<reference key="2">
    <citation type="journal article" date="2020" name="Biochem. Pharmacol.">
        <title>A selective Nav1.1 activator with potential for treatment of Dravet syndrome epilepsy.</title>
        <authorList>
            <person name="Chow C.Y."/>
            <person name="Chin Y.K.Y."/>
            <person name="Ma L."/>
            <person name="Undheim E.A.B."/>
            <person name="Herzig V."/>
            <person name="King G.F."/>
        </authorList>
    </citation>
    <scope>STRUCTURE BY NMR</scope>
    <scope>DISULFIDE BOND</scope>
    <scope>MASS SPECTROMETRY</scope>
    <scope>PHARMACEUTICAL</scope>
    <scope>STABILITY IN CEREBROSPINAL FLUID AND SERUM</scope>
    <scope>RECOMBINANT EXPRESSION</scope>
    <scope>AMIDATION AT PHE-34</scope>
    <source>
        <tissue>Venom</tissue>
    </source>
</reference>